<keyword id="KW-0025">Alternative splicing</keyword>
<keyword id="KW-0472">Membrane</keyword>
<keyword id="KW-0675">Receptor</keyword>
<keyword id="KW-1185">Reference proteome</keyword>
<keyword id="KW-0812">Transmembrane</keyword>
<keyword id="KW-1133">Transmembrane helix</keyword>
<dbReference type="EMBL" id="AF237918">
    <property type="protein sequence ID" value="AAK37614.1"/>
    <property type="molecule type" value="mRNA"/>
</dbReference>
<dbReference type="EMBL" id="AB026046">
    <property type="protein sequence ID" value="BAB18758.1"/>
    <property type="status" value="ALT_FRAME"/>
    <property type="molecule type" value="mRNA"/>
</dbReference>
<dbReference type="EMBL" id="AK008019">
    <property type="protein sequence ID" value="BAB25413.1"/>
    <property type="molecule type" value="mRNA"/>
</dbReference>
<dbReference type="CCDS" id="CCDS37919.1">
    <molecule id="Q99N03-1"/>
</dbReference>
<dbReference type="RefSeq" id="NP_076018.2">
    <molecule id="Q99N03-1"/>
    <property type="nucleotide sequence ID" value="NM_023529.3"/>
</dbReference>
<dbReference type="RefSeq" id="XP_006527392.1">
    <molecule id="Q99N03-2"/>
    <property type="nucleotide sequence ID" value="XM_006527329.3"/>
</dbReference>
<dbReference type="SMR" id="Q99N03"/>
<dbReference type="FunCoup" id="Q99N03">
    <property type="interactions" value="385"/>
</dbReference>
<dbReference type="IntAct" id="Q99N03">
    <property type="interactions" value="1"/>
</dbReference>
<dbReference type="MINT" id="Q99N03"/>
<dbReference type="STRING" id="10090.ENSMUSP00000072531"/>
<dbReference type="PhosphoSitePlus" id="Q99N03"/>
<dbReference type="PaxDb" id="10090-ENSMUSP00000072531"/>
<dbReference type="ProteomicsDB" id="292069">
    <molecule id="Q99N03-1"/>
</dbReference>
<dbReference type="ProteomicsDB" id="292070">
    <molecule id="Q99N03-2"/>
</dbReference>
<dbReference type="Antibodypedia" id="70877">
    <property type="antibodies" value="5 antibodies from 5 providers"/>
</dbReference>
<dbReference type="DNASU" id="69826"/>
<dbReference type="Ensembl" id="ENSMUST00000072748.13">
    <molecule id="Q99N03-1"/>
    <property type="protein sequence ID" value="ENSMUSP00000072531.7"/>
    <property type="gene ID" value="ENSMUSG00000024731.16"/>
</dbReference>
<dbReference type="Ensembl" id="ENSMUST00000191343.7">
    <molecule id="Q99N03-2"/>
    <property type="protein sequence ID" value="ENSMUSP00000140111.2"/>
    <property type="gene ID" value="ENSMUSG00000024731.16"/>
</dbReference>
<dbReference type="GeneID" id="69826"/>
<dbReference type="KEGG" id="mmu:69826"/>
<dbReference type="UCSC" id="uc008grk.1">
    <molecule id="Q99N03-1"/>
    <property type="organism name" value="mouse"/>
</dbReference>
<dbReference type="UCSC" id="uc012bir.1">
    <molecule id="Q99N03-2"/>
    <property type="organism name" value="mouse"/>
</dbReference>
<dbReference type="AGR" id="MGI:1917076"/>
<dbReference type="CTD" id="341116"/>
<dbReference type="MGI" id="MGI:1917076">
    <property type="gene designation" value="Ms4a10"/>
</dbReference>
<dbReference type="VEuPathDB" id="HostDB:ENSMUSG00000024731"/>
<dbReference type="eggNOG" id="ENOG502SH2M">
    <property type="taxonomic scope" value="Eukaryota"/>
</dbReference>
<dbReference type="GeneTree" id="ENSGT00390000010921"/>
<dbReference type="HOGENOM" id="CLU_1041911_0_0_1"/>
<dbReference type="InParanoid" id="Q99N03"/>
<dbReference type="OMA" id="AWRGDCP"/>
<dbReference type="OrthoDB" id="9449631at2759"/>
<dbReference type="PhylomeDB" id="Q99N03"/>
<dbReference type="TreeFam" id="TF339722"/>
<dbReference type="BioGRID-ORCS" id="69826">
    <property type="hits" value="2 hits in 76 CRISPR screens"/>
</dbReference>
<dbReference type="PRO" id="PR:Q99N03"/>
<dbReference type="Proteomes" id="UP000000589">
    <property type="component" value="Chromosome 19"/>
</dbReference>
<dbReference type="RNAct" id="Q99N03">
    <property type="molecule type" value="protein"/>
</dbReference>
<dbReference type="Bgee" id="ENSMUSG00000024731">
    <property type="expression patterns" value="Expressed in small intestine Peyer's patch and 29 other cell types or tissues"/>
</dbReference>
<dbReference type="ExpressionAtlas" id="Q99N03">
    <property type="expression patterns" value="baseline and differential"/>
</dbReference>
<dbReference type="GO" id="GO:0016020">
    <property type="term" value="C:membrane"/>
    <property type="evidence" value="ECO:0007669"/>
    <property type="project" value="UniProtKB-SubCell"/>
</dbReference>
<dbReference type="InterPro" id="IPR007237">
    <property type="entry name" value="CD20-like"/>
</dbReference>
<dbReference type="Pfam" id="PF04103">
    <property type="entry name" value="CD20"/>
    <property type="match status" value="1"/>
</dbReference>
<gene>
    <name type="primary">Ms4a10</name>
</gene>
<comment type="function">
    <text>May be involved in signal transduction as a component of a multimeric receptor complex.</text>
</comment>
<comment type="subcellular location">
    <subcellularLocation>
        <location>Membrane</location>
        <topology>Multi-pass membrane protein</topology>
    </subcellularLocation>
</comment>
<comment type="alternative products">
    <event type="alternative splicing"/>
    <isoform>
        <id>Q99N03-1</id>
        <name>1</name>
        <sequence type="displayed"/>
    </isoform>
    <isoform>
        <id>Q99N03-2</id>
        <name>2</name>
        <sequence type="described" ref="VSP_007387"/>
    </isoform>
</comment>
<comment type="tissue specificity">
    <text>Expressed in thymus, kidney, colon, brain and testis. Expressed also by various hematopoietic and lymphoblastoid cell lines.</text>
</comment>
<comment type="similarity">
    <text evidence="3">Belongs to the MS4A family.</text>
</comment>
<comment type="sequence caution" evidence="3">
    <conflict type="frameshift">
        <sequence resource="EMBL-CDS" id="BAB18758"/>
    </conflict>
</comment>
<evidence type="ECO:0000255" key="1"/>
<evidence type="ECO:0000303" key="2">
    <source>
    </source>
</evidence>
<evidence type="ECO:0000305" key="3"/>
<sequence>MAGQAPTAVPGSVTGEVSRWQNLGPAQPAQKVAQPQNLVPDGHLEKALEGSDLLQKLGGFHIAIAFAHLAFGGYLISTVKNLHLVVLKCWYPLWGTVSFLVAGMAAMTTVTFPKTSLKVLCVIANVISLFCALAGFFVIAKDLFLEGPFPWPIWRPYPEPTTYIQRLELTLFCFTFLEIFLSGSTAITAYRMKRLQAEDKDDTPFVPDTPMELKGLSLGPPPSYKDVAQGHSSSDTGRALATSSGLLLASDSFHQALLHTGPRTLRK</sequence>
<accession>Q99N03</accession>
<accession>Q9D8H8</accession>
<accession>Q9EQY8</accession>
<organism>
    <name type="scientific">Mus musculus</name>
    <name type="common">Mouse</name>
    <dbReference type="NCBI Taxonomy" id="10090"/>
    <lineage>
        <taxon>Eukaryota</taxon>
        <taxon>Metazoa</taxon>
        <taxon>Chordata</taxon>
        <taxon>Craniata</taxon>
        <taxon>Vertebrata</taxon>
        <taxon>Euteleostomi</taxon>
        <taxon>Mammalia</taxon>
        <taxon>Eutheria</taxon>
        <taxon>Euarchontoglires</taxon>
        <taxon>Glires</taxon>
        <taxon>Rodentia</taxon>
        <taxon>Myomorpha</taxon>
        <taxon>Muroidea</taxon>
        <taxon>Muridae</taxon>
        <taxon>Murinae</taxon>
        <taxon>Mus</taxon>
        <taxon>Mus</taxon>
    </lineage>
</organism>
<reference key="1">
    <citation type="journal article" date="2001" name="Genomics">
        <title>Identification of a CD20-, Fc-epsilon-RI-beta-, and HTm4-related gene family: sixteen new MS4A family members expressed in human and mouse.</title>
        <authorList>
            <person name="Liang Y."/>
            <person name="Tedder T.F."/>
        </authorList>
    </citation>
    <scope>NUCLEOTIDE SEQUENCE [MRNA] (ISOFORM 1)</scope>
    <source>
        <tissue>Fetus</tissue>
    </source>
</reference>
<reference key="2">
    <citation type="journal article" date="2001" name="Gene">
        <title>Identification of a new multigene four-transmembrane family (MS4A) related to CD20, HTm4 and beta subunit of the high-affinity IgE receptor.</title>
        <authorList>
            <person name="Ishibashi K."/>
            <person name="Suzuki M."/>
            <person name="Sasaki S."/>
            <person name="Imai M."/>
        </authorList>
    </citation>
    <scope>NUCLEOTIDE SEQUENCE [MRNA] (ISOFORM 1)</scope>
</reference>
<reference key="3">
    <citation type="journal article" date="2005" name="Science">
        <title>The transcriptional landscape of the mammalian genome.</title>
        <authorList>
            <person name="Carninci P."/>
            <person name="Kasukawa T."/>
            <person name="Katayama S."/>
            <person name="Gough J."/>
            <person name="Frith M.C."/>
            <person name="Maeda N."/>
            <person name="Oyama R."/>
            <person name="Ravasi T."/>
            <person name="Lenhard B."/>
            <person name="Wells C."/>
            <person name="Kodzius R."/>
            <person name="Shimokawa K."/>
            <person name="Bajic V.B."/>
            <person name="Brenner S.E."/>
            <person name="Batalov S."/>
            <person name="Forrest A.R."/>
            <person name="Zavolan M."/>
            <person name="Davis M.J."/>
            <person name="Wilming L.G."/>
            <person name="Aidinis V."/>
            <person name="Allen J.E."/>
            <person name="Ambesi-Impiombato A."/>
            <person name="Apweiler R."/>
            <person name="Aturaliya R.N."/>
            <person name="Bailey T.L."/>
            <person name="Bansal M."/>
            <person name="Baxter L."/>
            <person name="Beisel K.W."/>
            <person name="Bersano T."/>
            <person name="Bono H."/>
            <person name="Chalk A.M."/>
            <person name="Chiu K.P."/>
            <person name="Choudhary V."/>
            <person name="Christoffels A."/>
            <person name="Clutterbuck D.R."/>
            <person name="Crowe M.L."/>
            <person name="Dalla E."/>
            <person name="Dalrymple B.P."/>
            <person name="de Bono B."/>
            <person name="Della Gatta G."/>
            <person name="di Bernardo D."/>
            <person name="Down T."/>
            <person name="Engstrom P."/>
            <person name="Fagiolini M."/>
            <person name="Faulkner G."/>
            <person name="Fletcher C.F."/>
            <person name="Fukushima T."/>
            <person name="Furuno M."/>
            <person name="Futaki S."/>
            <person name="Gariboldi M."/>
            <person name="Georgii-Hemming P."/>
            <person name="Gingeras T.R."/>
            <person name="Gojobori T."/>
            <person name="Green R.E."/>
            <person name="Gustincich S."/>
            <person name="Harbers M."/>
            <person name="Hayashi Y."/>
            <person name="Hensch T.K."/>
            <person name="Hirokawa N."/>
            <person name="Hill D."/>
            <person name="Huminiecki L."/>
            <person name="Iacono M."/>
            <person name="Ikeo K."/>
            <person name="Iwama A."/>
            <person name="Ishikawa T."/>
            <person name="Jakt M."/>
            <person name="Kanapin A."/>
            <person name="Katoh M."/>
            <person name="Kawasawa Y."/>
            <person name="Kelso J."/>
            <person name="Kitamura H."/>
            <person name="Kitano H."/>
            <person name="Kollias G."/>
            <person name="Krishnan S.P."/>
            <person name="Kruger A."/>
            <person name="Kummerfeld S.K."/>
            <person name="Kurochkin I.V."/>
            <person name="Lareau L.F."/>
            <person name="Lazarevic D."/>
            <person name="Lipovich L."/>
            <person name="Liu J."/>
            <person name="Liuni S."/>
            <person name="McWilliam S."/>
            <person name="Madan Babu M."/>
            <person name="Madera M."/>
            <person name="Marchionni L."/>
            <person name="Matsuda H."/>
            <person name="Matsuzawa S."/>
            <person name="Miki H."/>
            <person name="Mignone F."/>
            <person name="Miyake S."/>
            <person name="Morris K."/>
            <person name="Mottagui-Tabar S."/>
            <person name="Mulder N."/>
            <person name="Nakano N."/>
            <person name="Nakauchi H."/>
            <person name="Ng P."/>
            <person name="Nilsson R."/>
            <person name="Nishiguchi S."/>
            <person name="Nishikawa S."/>
            <person name="Nori F."/>
            <person name="Ohara O."/>
            <person name="Okazaki Y."/>
            <person name="Orlando V."/>
            <person name="Pang K.C."/>
            <person name="Pavan W.J."/>
            <person name="Pavesi G."/>
            <person name="Pesole G."/>
            <person name="Petrovsky N."/>
            <person name="Piazza S."/>
            <person name="Reed J."/>
            <person name="Reid J.F."/>
            <person name="Ring B.Z."/>
            <person name="Ringwald M."/>
            <person name="Rost B."/>
            <person name="Ruan Y."/>
            <person name="Salzberg S.L."/>
            <person name="Sandelin A."/>
            <person name="Schneider C."/>
            <person name="Schoenbach C."/>
            <person name="Sekiguchi K."/>
            <person name="Semple C.A."/>
            <person name="Seno S."/>
            <person name="Sessa L."/>
            <person name="Sheng Y."/>
            <person name="Shibata Y."/>
            <person name="Shimada H."/>
            <person name="Shimada K."/>
            <person name="Silva D."/>
            <person name="Sinclair B."/>
            <person name="Sperling S."/>
            <person name="Stupka E."/>
            <person name="Sugiura K."/>
            <person name="Sultana R."/>
            <person name="Takenaka Y."/>
            <person name="Taki K."/>
            <person name="Tammoja K."/>
            <person name="Tan S.L."/>
            <person name="Tang S."/>
            <person name="Taylor M.S."/>
            <person name="Tegner J."/>
            <person name="Teichmann S.A."/>
            <person name="Ueda H.R."/>
            <person name="van Nimwegen E."/>
            <person name="Verardo R."/>
            <person name="Wei C.L."/>
            <person name="Yagi K."/>
            <person name="Yamanishi H."/>
            <person name="Zabarovsky E."/>
            <person name="Zhu S."/>
            <person name="Zimmer A."/>
            <person name="Hide W."/>
            <person name="Bult C."/>
            <person name="Grimmond S.M."/>
            <person name="Teasdale R.D."/>
            <person name="Liu E.T."/>
            <person name="Brusic V."/>
            <person name="Quackenbush J."/>
            <person name="Wahlestedt C."/>
            <person name="Mattick J.S."/>
            <person name="Hume D.A."/>
            <person name="Kai C."/>
            <person name="Sasaki D."/>
            <person name="Tomaru Y."/>
            <person name="Fukuda S."/>
            <person name="Kanamori-Katayama M."/>
            <person name="Suzuki M."/>
            <person name="Aoki J."/>
            <person name="Arakawa T."/>
            <person name="Iida J."/>
            <person name="Imamura K."/>
            <person name="Itoh M."/>
            <person name="Kato T."/>
            <person name="Kawaji H."/>
            <person name="Kawagashira N."/>
            <person name="Kawashima T."/>
            <person name="Kojima M."/>
            <person name="Kondo S."/>
            <person name="Konno H."/>
            <person name="Nakano K."/>
            <person name="Ninomiya N."/>
            <person name="Nishio T."/>
            <person name="Okada M."/>
            <person name="Plessy C."/>
            <person name="Shibata K."/>
            <person name="Shiraki T."/>
            <person name="Suzuki S."/>
            <person name="Tagami M."/>
            <person name="Waki K."/>
            <person name="Watahiki A."/>
            <person name="Okamura-Oho Y."/>
            <person name="Suzuki H."/>
            <person name="Kawai J."/>
            <person name="Hayashizaki Y."/>
        </authorList>
    </citation>
    <scope>NUCLEOTIDE SEQUENCE [LARGE SCALE MRNA] (ISOFORM 2)</scope>
    <source>
        <strain>C57BL/6J</strain>
        <tissue>Small intestine</tissue>
    </source>
</reference>
<name>M4A10_MOUSE</name>
<protein>
    <recommendedName>
        <fullName>Membrane-spanning 4-domains subfamily A member 10</fullName>
    </recommendedName>
</protein>
<proteinExistence type="evidence at transcript level"/>
<feature type="chain" id="PRO_0000158647" description="Membrane-spanning 4-domains subfamily A member 10">
    <location>
        <begin position="1"/>
        <end position="267"/>
    </location>
</feature>
<feature type="topological domain" description="Cytoplasmic" evidence="1">
    <location>
        <begin position="1"/>
        <end position="56"/>
    </location>
</feature>
<feature type="transmembrane region" description="Helical" evidence="1">
    <location>
        <begin position="57"/>
        <end position="77"/>
    </location>
</feature>
<feature type="topological domain" description="Extracellular" evidence="1">
    <location>
        <begin position="78"/>
        <end position="83"/>
    </location>
</feature>
<feature type="transmembrane region" description="Helical" evidence="1">
    <location>
        <begin position="84"/>
        <end position="104"/>
    </location>
</feature>
<feature type="topological domain" description="Cytoplasmic" evidence="1">
    <location>
        <begin position="105"/>
        <end position="118"/>
    </location>
</feature>
<feature type="transmembrane region" description="Helical" evidence="1">
    <location>
        <begin position="119"/>
        <end position="139"/>
    </location>
</feature>
<feature type="topological domain" description="Extracellular" evidence="1">
    <location>
        <begin position="140"/>
        <end position="168"/>
    </location>
</feature>
<feature type="transmembrane region" description="Helical" evidence="1">
    <location>
        <begin position="169"/>
        <end position="189"/>
    </location>
</feature>
<feature type="topological domain" description="Cytoplasmic" evidence="1">
    <location>
        <begin position="190"/>
        <end position="267"/>
    </location>
</feature>
<feature type="splice variant" id="VSP_007387" description="In isoform 2." evidence="2">
    <location>
        <begin position="59"/>
        <end position="98"/>
    </location>
</feature>
<feature type="sequence conflict" description="In Ref. 2; BAB18758." evidence="3" ref="2">
    <original>V</original>
    <variation>G</variation>
    <location>
        <position position="97"/>
    </location>
</feature>